<dbReference type="EC" id="3.2.1.4" evidence="6"/>
<dbReference type="EMBL" id="BN001302">
    <property type="protein sequence ID" value="CBF75223.1"/>
    <property type="molecule type" value="Genomic_DNA"/>
</dbReference>
<dbReference type="RefSeq" id="XP_661464.1">
    <property type="nucleotide sequence ID" value="XM_656372.1"/>
</dbReference>
<dbReference type="SMR" id="Q5B6H0"/>
<dbReference type="STRING" id="227321.Q5B6H0"/>
<dbReference type="CAZy" id="AA9">
    <property type="family name" value="Auxiliary Activities 9"/>
</dbReference>
<dbReference type="EnsemblFungi" id="CBF75223">
    <property type="protein sequence ID" value="CBF75223"/>
    <property type="gene ID" value="ANIA_03860"/>
</dbReference>
<dbReference type="GeneID" id="2873281"/>
<dbReference type="KEGG" id="ani:ANIA_03860"/>
<dbReference type="eggNOG" id="ENOG502RY3D">
    <property type="taxonomic scope" value="Eukaryota"/>
</dbReference>
<dbReference type="HOGENOM" id="CLU_031730_1_3_1"/>
<dbReference type="InParanoid" id="Q5B6H0"/>
<dbReference type="OMA" id="PPDTIAW"/>
<dbReference type="OrthoDB" id="4849160at2759"/>
<dbReference type="Proteomes" id="UP000000560">
    <property type="component" value="Chromosome II"/>
</dbReference>
<dbReference type="GO" id="GO:0005576">
    <property type="term" value="C:extracellular region"/>
    <property type="evidence" value="ECO:0007669"/>
    <property type="project" value="UniProtKB-SubCell"/>
</dbReference>
<dbReference type="GO" id="GO:0016798">
    <property type="term" value="F:hydrolase activity, acting on glycosyl bonds"/>
    <property type="evidence" value="ECO:0007669"/>
    <property type="project" value="UniProtKB-KW"/>
</dbReference>
<dbReference type="GO" id="GO:0046872">
    <property type="term" value="F:metal ion binding"/>
    <property type="evidence" value="ECO:0007669"/>
    <property type="project" value="UniProtKB-KW"/>
</dbReference>
<dbReference type="GO" id="GO:0030245">
    <property type="term" value="P:cellulose catabolic process"/>
    <property type="evidence" value="ECO:0007669"/>
    <property type="project" value="UniProtKB-KW"/>
</dbReference>
<dbReference type="CDD" id="cd21175">
    <property type="entry name" value="LPMO_AA9"/>
    <property type="match status" value="1"/>
</dbReference>
<dbReference type="Gene3D" id="2.70.50.70">
    <property type="match status" value="1"/>
</dbReference>
<dbReference type="InterPro" id="IPR049892">
    <property type="entry name" value="AA9"/>
</dbReference>
<dbReference type="InterPro" id="IPR005103">
    <property type="entry name" value="AA9_LPMO"/>
</dbReference>
<dbReference type="PANTHER" id="PTHR33353:SF34">
    <property type="entry name" value="ENDO-BETA-1,4-GLUCANASE D"/>
    <property type="match status" value="1"/>
</dbReference>
<dbReference type="PANTHER" id="PTHR33353">
    <property type="entry name" value="PUTATIVE (AFU_ORTHOLOGUE AFUA_1G12560)-RELATED"/>
    <property type="match status" value="1"/>
</dbReference>
<dbReference type="Pfam" id="PF03443">
    <property type="entry name" value="AA9"/>
    <property type="match status" value="1"/>
</dbReference>
<name>LP9F_EMENI</name>
<sequence length="250" mass="26410">MAMSKIATLAGLLASAGLVAGHGYVTKMTIDGEEYGGWLADSYYYMDSPPDNYGWSTTVTDNGFVSPDAFGTDDITCHRGATPGALSAPVTAGSKIDITWNTWPESHKDNQGPIINYLAKCNGDCSSADKTSLEFVKIQAEAIVDASTNTWVTDELIENSFTTSVTIPASIAPGNYVLRHEIIALHSAGQQNGAQAYPQCLNLVVSGSGTDNPSGTPGTQLYSANDEGIVFDIYSNPTSYPMPGPELYSG</sequence>
<feature type="signal peptide" evidence="3">
    <location>
        <begin position="1"/>
        <end position="21"/>
    </location>
</feature>
<feature type="chain" id="PRO_0000460006" description="AA9 family lytic polysaccharide monooxygenase F">
    <location>
        <begin position="22"/>
        <end position="250"/>
    </location>
</feature>
<feature type="binding site" evidence="1">
    <location>
        <position position="22"/>
    </location>
    <ligand>
        <name>Cu(2+)</name>
        <dbReference type="ChEBI" id="CHEBI:29036"/>
        <note>catalytic</note>
    </ligand>
</feature>
<feature type="binding site" evidence="1">
    <location>
        <position position="51"/>
    </location>
    <ligand>
        <name>O2</name>
        <dbReference type="ChEBI" id="CHEBI:15379"/>
    </ligand>
</feature>
<feature type="binding site" evidence="1">
    <location>
        <position position="107"/>
    </location>
    <ligand>
        <name>Cu(2+)</name>
        <dbReference type="ChEBI" id="CHEBI:29036"/>
        <note>catalytic</note>
    </ligand>
</feature>
<feature type="binding site" evidence="1">
    <location>
        <position position="186"/>
    </location>
    <ligand>
        <name>O2</name>
        <dbReference type="ChEBI" id="CHEBI:15379"/>
    </ligand>
</feature>
<feature type="binding site" evidence="1">
    <location>
        <position position="195"/>
    </location>
    <ligand>
        <name>O2</name>
        <dbReference type="ChEBI" id="CHEBI:15379"/>
    </ligand>
</feature>
<feature type="binding site" evidence="1">
    <location>
        <position position="197"/>
    </location>
    <ligand>
        <name>Cu(2+)</name>
        <dbReference type="ChEBI" id="CHEBI:29036"/>
        <note>catalytic</note>
    </ligand>
</feature>
<feature type="disulfide bond" evidence="2">
    <location>
        <begin position="77"/>
        <end position="200"/>
    </location>
</feature>
<feature type="disulfide bond" evidence="2">
    <location>
        <begin position="121"/>
        <end position="125"/>
    </location>
</feature>
<accession>Q5B6H0</accession>
<accession>C8V6H2</accession>
<keyword id="KW-0119">Carbohydrate metabolism</keyword>
<keyword id="KW-0136">Cellulose degradation</keyword>
<keyword id="KW-0186">Copper</keyword>
<keyword id="KW-1015">Disulfide bond</keyword>
<keyword id="KW-0326">Glycosidase</keyword>
<keyword id="KW-0378">Hydrolase</keyword>
<keyword id="KW-0479">Metal-binding</keyword>
<keyword id="KW-0624">Polysaccharide degradation</keyword>
<keyword id="KW-1185">Reference proteome</keyword>
<keyword id="KW-0964">Secreted</keyword>
<keyword id="KW-0732">Signal</keyword>
<comment type="function">
    <text evidence="5 6">Lytic polysaccharide monooxygenase (LMPO) that depolymerizes crystalline and amorphous polysaccharides via the oxidation of scissile alpha- or beta-(1-4)-glycosidic bonds, yielding C1 or C4 oxidation products (PubMed:27075737, PubMed:35658600). Catalysis by LPMOs requires the reduction of the active-site copper from Cu(II) to Cu(I) by a reducing agent and H(2)O(2) or O(2) as a cosubstrate (PubMed:35658600). Major secreted component of the extracellular cellulolytic system (PubMed:35658600).</text>
</comment>
<comment type="catalytic activity">
    <reaction evidence="6">
        <text>Endohydrolysis of (1-&gt;4)-beta-D-glucosidic linkages in cellulose, lichenin and cereal beta-D-glucans.</text>
        <dbReference type="EC" id="3.2.1.4"/>
    </reaction>
</comment>
<comment type="cofactor">
    <cofactor evidence="1">
        <name>Cu(2+)</name>
        <dbReference type="ChEBI" id="CHEBI:29036"/>
    </cofactor>
    <text evidence="1">Binds 1 copper ion per subunit.</text>
</comment>
<comment type="subcellular location">
    <subcellularLocation>
        <location evidence="4 6">Secreted</location>
    </subcellularLocation>
</comment>
<comment type="induction">
    <text evidence="5 6">Expression is induced by cellulose and xyloglucan (PubMed:27075737, PubMed:35658600). Expression is also slightly induced by chitin, a main component of fungal cell walls with a structure closely related to cellulose (PubMed:27075737). The promoter contains two consensus sequences for xlnR binding sites (5'-GGCTAA/G-3') (PubMed:27075737). The degenerate binding motif 5'-SYGGRG-3' that binds to creA involved in carbon catabolite repression is also present in the promoter (PubMed:27075737).</text>
</comment>
<comment type="disruption phenotype">
    <text evidence="6">Results in about 25% reduction in fungal growth on sugarcane straw but not on Avicel (PubMed:35658600). Results in 60% reduction in activity using phosphoric acid-swollen cellulose (PASC) as the substrate (PubMed:35658600).</text>
</comment>
<comment type="biotechnology">
    <text evidence="9">Lignocellulose is the most abundant polymeric composite on Earth and is a recalcitrant but promising renewable substrate for industrial biotechnology applications. Together with cellobiose dehydrogenases (CDHs) an enzymatic system capable of oxidative cellulose cleavage is formed, which increases the efficiency of cellulases and put LPMOs at focus of biofuel research.</text>
</comment>
<comment type="similarity">
    <text evidence="8">Belongs to the glycosyl hydrolase 61 family.</text>
</comment>
<gene>
    <name evidence="7" type="primary">LPMO9F</name>
    <name type="ORF">AN3860</name>
    <name type="ORF">ANIA_03860</name>
</gene>
<protein>
    <recommendedName>
        <fullName evidence="7">AA9 family lytic polysaccharide monooxygenase F</fullName>
        <shortName evidence="7">LPMO9F</shortName>
        <ecNumber evidence="6">3.2.1.4</ecNumber>
    </recommendedName>
    <alternativeName>
        <fullName evidence="8">Cellulase LPMO9F</fullName>
    </alternativeName>
    <alternativeName>
        <fullName evidence="8">Endo-beta-1,4-glucanase LPMO9F</fullName>
        <shortName evidence="8">Endoglucanase LPMO9F</shortName>
    </alternativeName>
    <alternativeName>
        <fullName evidence="8">Glycosyl hydrolase 61 family protein LPMO9F</fullName>
    </alternativeName>
</protein>
<evidence type="ECO:0000250" key="1">
    <source>
        <dbReference type="UniProtKB" id="Q1K8B6"/>
    </source>
</evidence>
<evidence type="ECO:0000250" key="2">
    <source>
        <dbReference type="UniProtKB" id="Q4WP32"/>
    </source>
</evidence>
<evidence type="ECO:0000255" key="3"/>
<evidence type="ECO:0000269" key="4">
    <source>
    </source>
</evidence>
<evidence type="ECO:0000269" key="5">
    <source>
    </source>
</evidence>
<evidence type="ECO:0000269" key="6">
    <source>
    </source>
</evidence>
<evidence type="ECO:0000303" key="7">
    <source>
    </source>
</evidence>
<evidence type="ECO:0000305" key="8"/>
<evidence type="ECO:0000305" key="9">
    <source>
    </source>
</evidence>
<proteinExistence type="evidence at protein level"/>
<reference key="1">
    <citation type="journal article" date="2005" name="Nature">
        <title>Sequencing of Aspergillus nidulans and comparative analysis with A. fumigatus and A. oryzae.</title>
        <authorList>
            <person name="Galagan J.E."/>
            <person name="Calvo S.E."/>
            <person name="Cuomo C."/>
            <person name="Ma L.-J."/>
            <person name="Wortman J.R."/>
            <person name="Batzoglou S."/>
            <person name="Lee S.-I."/>
            <person name="Bastuerkmen M."/>
            <person name="Spevak C.C."/>
            <person name="Clutterbuck J."/>
            <person name="Kapitonov V."/>
            <person name="Jurka J."/>
            <person name="Scazzocchio C."/>
            <person name="Farman M.L."/>
            <person name="Butler J."/>
            <person name="Purcell S."/>
            <person name="Harris S."/>
            <person name="Braus G.H."/>
            <person name="Draht O."/>
            <person name="Busch S."/>
            <person name="D'Enfert C."/>
            <person name="Bouchier C."/>
            <person name="Goldman G.H."/>
            <person name="Bell-Pedersen D."/>
            <person name="Griffiths-Jones S."/>
            <person name="Doonan J.H."/>
            <person name="Yu J."/>
            <person name="Vienken K."/>
            <person name="Pain A."/>
            <person name="Freitag M."/>
            <person name="Selker E.U."/>
            <person name="Archer D.B."/>
            <person name="Penalva M.A."/>
            <person name="Oakley B.R."/>
            <person name="Momany M."/>
            <person name="Tanaka T."/>
            <person name="Kumagai T."/>
            <person name="Asai K."/>
            <person name="Machida M."/>
            <person name="Nierman W.C."/>
            <person name="Denning D.W."/>
            <person name="Caddick M.X."/>
            <person name="Hynes M."/>
            <person name="Paoletti M."/>
            <person name="Fischer R."/>
            <person name="Miller B.L."/>
            <person name="Dyer P.S."/>
            <person name="Sachs M.S."/>
            <person name="Osmani S.A."/>
            <person name="Birren B.W."/>
        </authorList>
    </citation>
    <scope>NUCLEOTIDE SEQUENCE [LARGE SCALE GENOMIC DNA]</scope>
    <source>
        <strain>FGSC A4 / ATCC 38163 / CBS 112.46 / NRRL 194 / M139</strain>
    </source>
</reference>
<reference key="2">
    <citation type="journal article" date="2009" name="Fungal Genet. Biol.">
        <title>The 2008 update of the Aspergillus nidulans genome annotation: a community effort.</title>
        <authorList>
            <person name="Wortman J.R."/>
            <person name="Gilsenan J.M."/>
            <person name="Joardar V."/>
            <person name="Deegan J."/>
            <person name="Clutterbuck J."/>
            <person name="Andersen M.R."/>
            <person name="Archer D."/>
            <person name="Bencina M."/>
            <person name="Braus G."/>
            <person name="Coutinho P."/>
            <person name="von Dohren H."/>
            <person name="Doonan J."/>
            <person name="Driessen A.J."/>
            <person name="Durek P."/>
            <person name="Espeso E."/>
            <person name="Fekete E."/>
            <person name="Flipphi M."/>
            <person name="Estrada C.G."/>
            <person name="Geysens S."/>
            <person name="Goldman G."/>
            <person name="de Groot P.W."/>
            <person name="Hansen K."/>
            <person name="Harris S.D."/>
            <person name="Heinekamp T."/>
            <person name="Helmstaedt K."/>
            <person name="Henrissat B."/>
            <person name="Hofmann G."/>
            <person name="Homan T."/>
            <person name="Horio T."/>
            <person name="Horiuchi H."/>
            <person name="James S."/>
            <person name="Jones M."/>
            <person name="Karaffa L."/>
            <person name="Karanyi Z."/>
            <person name="Kato M."/>
            <person name="Keller N."/>
            <person name="Kelly D.E."/>
            <person name="Kiel J.A."/>
            <person name="Kim J.M."/>
            <person name="van der Klei I.J."/>
            <person name="Klis F.M."/>
            <person name="Kovalchuk A."/>
            <person name="Krasevec N."/>
            <person name="Kubicek C.P."/>
            <person name="Liu B."/>
            <person name="Maccabe A."/>
            <person name="Meyer V."/>
            <person name="Mirabito P."/>
            <person name="Miskei M."/>
            <person name="Mos M."/>
            <person name="Mullins J."/>
            <person name="Nelson D.R."/>
            <person name="Nielsen J."/>
            <person name="Oakley B.R."/>
            <person name="Osmani S.A."/>
            <person name="Pakula T."/>
            <person name="Paszewski A."/>
            <person name="Paulsen I."/>
            <person name="Pilsyk S."/>
            <person name="Pocsi I."/>
            <person name="Punt P.J."/>
            <person name="Ram A.F."/>
            <person name="Ren Q."/>
            <person name="Robellet X."/>
            <person name="Robson G."/>
            <person name="Seiboth B."/>
            <person name="van Solingen P."/>
            <person name="Specht T."/>
            <person name="Sun J."/>
            <person name="Taheri-Talesh N."/>
            <person name="Takeshita N."/>
            <person name="Ussery D."/>
            <person name="vanKuyk P.A."/>
            <person name="Visser H."/>
            <person name="van de Vondervoort P.J."/>
            <person name="de Vries R.P."/>
            <person name="Walton J."/>
            <person name="Xiang X."/>
            <person name="Xiong Y."/>
            <person name="Zeng A.P."/>
            <person name="Brandt B.W."/>
            <person name="Cornell M.J."/>
            <person name="van den Hondel C.A."/>
            <person name="Visser J."/>
            <person name="Oliver S.G."/>
            <person name="Turner G."/>
        </authorList>
    </citation>
    <scope>GENOME REANNOTATION</scope>
    <source>
        <strain>FGSC A4 / ATCC 38163 / CBS 112.46 / NRRL 194 / M139</strain>
    </source>
</reference>
<reference key="3">
    <citation type="journal article" date="2012" name="Biotechnol. Biofuels">
        <title>A time course analysis of the extracellular proteome of Aspergillus nidulans growing on sorghum stover.</title>
        <authorList>
            <person name="Saykhedkar S."/>
            <person name="Ray A."/>
            <person name="Ayoubi-Canaan P."/>
            <person name="Hartson S.D."/>
            <person name="Prade R."/>
            <person name="Mort A.J."/>
        </authorList>
    </citation>
    <scope>SUBCELLULAR LOCATION</scope>
</reference>
<reference key="4">
    <citation type="journal article" date="2016" name="Appl. Microbiol. Biotechnol.">
        <title>A family of AA9 lytic polysaccharide monooxygenases in Aspergillus nidulans is differentially regulated by multiple substrates and at least one is active on cellulose and xyloglucan.</title>
        <authorList>
            <person name="Jagadeeswaran G."/>
            <person name="Gainey L."/>
            <person name="Prade R."/>
            <person name="Mort A.J."/>
        </authorList>
    </citation>
    <scope>FUNCTION</scope>
    <scope>INDUCTION</scope>
    <scope>BIOTECHNOLOGY</scope>
</reference>
<reference key="5">
    <citation type="journal article" date="2016" name="Biotechnol. Biofuels">
        <title>Lytic polysaccharide monooxygenases and other oxidative enzymes are abundantly secreted by Aspergillus nidulans grown on different starches.</title>
        <authorList>
            <person name="Nekiunaite L."/>
            <person name="Arntzen M.O."/>
            <person name="Svensson B."/>
            <person name="Vaaje-Kolstad G."/>
            <person name="Abou Hachem M."/>
        </authorList>
    </citation>
    <scope>IDENTIFICATION</scope>
</reference>
<reference key="6">
    <citation type="journal article" date="2022" name="Microbiol. Spectr.">
        <title>Deletion of AA9 Lytic Polysaccharide Monooxygenases Impacts A. nidulans Secretome and Growth on Lignocellulose.</title>
        <authorList>
            <person name="Terrasan C.R.F."/>
            <person name="Rubio M.V."/>
            <person name="Gerhardt J.A."/>
            <person name="Cairo J.P.F."/>
            <person name="Contesini F.J."/>
            <person name="Zubieta M.P."/>
            <person name="Figueiredo F.L."/>
            <person name="Valadares F.L."/>
            <person name="Correa T.L.R."/>
            <person name="Murakami M.T."/>
            <person name="Franco T.T."/>
            <person name="Davies G.J."/>
            <person name="Walton P.H."/>
            <person name="Damasio A."/>
        </authorList>
    </citation>
    <scope>FUNCTION</scope>
    <scope>CATALYTIC ACTIVITY</scope>
    <scope>DISRUPTION PHENOTYPE</scope>
    <scope>SUBCELLULAR LOCATION</scope>
    <scope>INDUCTION</scope>
</reference>
<organism>
    <name type="scientific">Emericella nidulans (strain FGSC A4 / ATCC 38163 / CBS 112.46 / NRRL 194 / M139)</name>
    <name type="common">Aspergillus nidulans</name>
    <dbReference type="NCBI Taxonomy" id="227321"/>
    <lineage>
        <taxon>Eukaryota</taxon>
        <taxon>Fungi</taxon>
        <taxon>Dikarya</taxon>
        <taxon>Ascomycota</taxon>
        <taxon>Pezizomycotina</taxon>
        <taxon>Eurotiomycetes</taxon>
        <taxon>Eurotiomycetidae</taxon>
        <taxon>Eurotiales</taxon>
        <taxon>Aspergillaceae</taxon>
        <taxon>Aspergillus</taxon>
        <taxon>Aspergillus subgen. Nidulantes</taxon>
    </lineage>
</organism>